<organism>
    <name type="scientific">Brucella ovis (strain ATCC 25840 / 63/290 / NCTC 10512)</name>
    <dbReference type="NCBI Taxonomy" id="444178"/>
    <lineage>
        <taxon>Bacteria</taxon>
        <taxon>Pseudomonadati</taxon>
        <taxon>Pseudomonadota</taxon>
        <taxon>Alphaproteobacteria</taxon>
        <taxon>Hyphomicrobiales</taxon>
        <taxon>Brucellaceae</taxon>
        <taxon>Brucella/Ochrobactrum group</taxon>
        <taxon>Brucella</taxon>
    </lineage>
</organism>
<gene>
    <name evidence="1" type="primary">gpmA</name>
    <name type="ordered locus">BOV_A0990</name>
</gene>
<comment type="function">
    <text evidence="1">Catalyzes the interconversion of 2-phosphoglycerate and 3-phosphoglycerate.</text>
</comment>
<comment type="catalytic activity">
    <reaction evidence="1">
        <text>(2R)-2-phosphoglycerate = (2R)-3-phosphoglycerate</text>
        <dbReference type="Rhea" id="RHEA:15901"/>
        <dbReference type="ChEBI" id="CHEBI:58272"/>
        <dbReference type="ChEBI" id="CHEBI:58289"/>
        <dbReference type="EC" id="5.4.2.11"/>
    </reaction>
</comment>
<comment type="pathway">
    <text evidence="1">Carbohydrate degradation; glycolysis; pyruvate from D-glyceraldehyde 3-phosphate: step 3/5.</text>
</comment>
<comment type="subunit">
    <text evidence="1">Homodimer.</text>
</comment>
<comment type="similarity">
    <text evidence="1">Belongs to the phosphoglycerate mutase family. BPG-dependent PGAM subfamily.</text>
</comment>
<evidence type="ECO:0000255" key="1">
    <source>
        <dbReference type="HAMAP-Rule" id="MF_01039"/>
    </source>
</evidence>
<feature type="chain" id="PRO_1000064036" description="2,3-bisphosphoglycerate-dependent phosphoglycerate mutase">
    <location>
        <begin position="1"/>
        <end position="206"/>
    </location>
</feature>
<feature type="active site" description="Tele-phosphohistidine intermediate" evidence="1">
    <location>
        <position position="10"/>
    </location>
</feature>
<feature type="active site" description="Proton donor/acceptor" evidence="1">
    <location>
        <position position="88"/>
    </location>
</feature>
<feature type="binding site" evidence="1">
    <location>
        <begin position="9"/>
        <end position="16"/>
    </location>
    <ligand>
        <name>substrate</name>
    </ligand>
</feature>
<feature type="binding site" evidence="1">
    <location>
        <begin position="22"/>
        <end position="23"/>
    </location>
    <ligand>
        <name>substrate</name>
    </ligand>
</feature>
<feature type="binding site" evidence="1">
    <location>
        <position position="61"/>
    </location>
    <ligand>
        <name>substrate</name>
    </ligand>
</feature>
<feature type="binding site" evidence="1">
    <location>
        <begin position="88"/>
        <end position="91"/>
    </location>
    <ligand>
        <name>substrate</name>
    </ligand>
</feature>
<feature type="binding site" evidence="1">
    <location>
        <position position="99"/>
    </location>
    <ligand>
        <name>substrate</name>
    </ligand>
</feature>
<feature type="binding site" evidence="1">
    <location>
        <begin position="115"/>
        <end position="116"/>
    </location>
    <ligand>
        <name>substrate</name>
    </ligand>
</feature>
<feature type="binding site" evidence="1">
    <location>
        <begin position="159"/>
        <end position="160"/>
    </location>
    <ligand>
        <name>substrate</name>
    </ligand>
</feature>
<feature type="site" description="Transition state stabilizer" evidence="1">
    <location>
        <position position="158"/>
    </location>
</feature>
<accession>A5VVV5</accession>
<proteinExistence type="inferred from homology"/>
<dbReference type="EC" id="5.4.2.11" evidence="1"/>
<dbReference type="EMBL" id="CP000709">
    <property type="protein sequence ID" value="ABQ62257.1"/>
    <property type="molecule type" value="Genomic_DNA"/>
</dbReference>
<dbReference type="RefSeq" id="WP_006016655.1">
    <property type="nucleotide sequence ID" value="NC_009504.1"/>
</dbReference>
<dbReference type="SMR" id="A5VVV5"/>
<dbReference type="GeneID" id="45126351"/>
<dbReference type="KEGG" id="bov:BOV_A0990"/>
<dbReference type="HOGENOM" id="CLU_033323_1_4_5"/>
<dbReference type="PhylomeDB" id="A5VVV5"/>
<dbReference type="UniPathway" id="UPA00109">
    <property type="reaction ID" value="UER00186"/>
</dbReference>
<dbReference type="Proteomes" id="UP000006383">
    <property type="component" value="Chromosome II"/>
</dbReference>
<dbReference type="GO" id="GO:0004619">
    <property type="term" value="F:phosphoglycerate mutase activity"/>
    <property type="evidence" value="ECO:0007669"/>
    <property type="project" value="UniProtKB-EC"/>
</dbReference>
<dbReference type="GO" id="GO:0006094">
    <property type="term" value="P:gluconeogenesis"/>
    <property type="evidence" value="ECO:0007669"/>
    <property type="project" value="UniProtKB-UniRule"/>
</dbReference>
<dbReference type="GO" id="GO:0006096">
    <property type="term" value="P:glycolytic process"/>
    <property type="evidence" value="ECO:0007669"/>
    <property type="project" value="UniProtKB-UniRule"/>
</dbReference>
<dbReference type="CDD" id="cd07067">
    <property type="entry name" value="HP_PGM_like"/>
    <property type="match status" value="1"/>
</dbReference>
<dbReference type="Gene3D" id="3.40.50.1240">
    <property type="entry name" value="Phosphoglycerate mutase-like"/>
    <property type="match status" value="1"/>
</dbReference>
<dbReference type="HAMAP" id="MF_01039">
    <property type="entry name" value="PGAM_GpmA"/>
    <property type="match status" value="1"/>
</dbReference>
<dbReference type="InterPro" id="IPR013078">
    <property type="entry name" value="His_Pase_superF_clade-1"/>
</dbReference>
<dbReference type="InterPro" id="IPR029033">
    <property type="entry name" value="His_PPase_superfam"/>
</dbReference>
<dbReference type="InterPro" id="IPR001345">
    <property type="entry name" value="PG/BPGM_mutase_AS"/>
</dbReference>
<dbReference type="InterPro" id="IPR005952">
    <property type="entry name" value="Phosphogly_mut1"/>
</dbReference>
<dbReference type="NCBIfam" id="TIGR01258">
    <property type="entry name" value="pgm_1"/>
    <property type="match status" value="1"/>
</dbReference>
<dbReference type="NCBIfam" id="NF002339">
    <property type="entry name" value="PRK01295.1"/>
    <property type="match status" value="1"/>
</dbReference>
<dbReference type="PANTHER" id="PTHR11931">
    <property type="entry name" value="PHOSPHOGLYCERATE MUTASE"/>
    <property type="match status" value="1"/>
</dbReference>
<dbReference type="Pfam" id="PF00300">
    <property type="entry name" value="His_Phos_1"/>
    <property type="match status" value="1"/>
</dbReference>
<dbReference type="PIRSF" id="PIRSF000709">
    <property type="entry name" value="6PFK_2-Ptase"/>
    <property type="match status" value="1"/>
</dbReference>
<dbReference type="SMART" id="SM00855">
    <property type="entry name" value="PGAM"/>
    <property type="match status" value="1"/>
</dbReference>
<dbReference type="SUPFAM" id="SSF53254">
    <property type="entry name" value="Phosphoglycerate mutase-like"/>
    <property type="match status" value="1"/>
</dbReference>
<dbReference type="PROSITE" id="PS00175">
    <property type="entry name" value="PG_MUTASE"/>
    <property type="match status" value="1"/>
</dbReference>
<protein>
    <recommendedName>
        <fullName evidence="1">2,3-bisphosphoglycerate-dependent phosphoglycerate mutase</fullName>
        <shortName evidence="1">BPG-dependent PGAM</shortName>
        <shortName evidence="1">PGAM</shortName>
        <shortName evidence="1">Phosphoglyceromutase</shortName>
        <shortName evidence="1">dPGM</shortName>
        <ecNumber evidence="1">5.4.2.11</ecNumber>
    </recommendedName>
</protein>
<name>GPMA_BRUO2</name>
<keyword id="KW-0312">Gluconeogenesis</keyword>
<keyword id="KW-0324">Glycolysis</keyword>
<keyword id="KW-0413">Isomerase</keyword>
<reference key="1">
    <citation type="journal article" date="2009" name="PLoS ONE">
        <title>Genome degradation in Brucella ovis corresponds with narrowing of its host range and tissue tropism.</title>
        <authorList>
            <person name="Tsolis R.M."/>
            <person name="Seshadri R."/>
            <person name="Santos R.L."/>
            <person name="Sangari F.J."/>
            <person name="Lobo J.M."/>
            <person name="de Jong M.F."/>
            <person name="Ren Q."/>
            <person name="Myers G."/>
            <person name="Brinkac L.M."/>
            <person name="Nelson W.C."/>
            <person name="Deboy R.T."/>
            <person name="Angiuoli S."/>
            <person name="Khouri H."/>
            <person name="Dimitrov G."/>
            <person name="Robinson J.R."/>
            <person name="Mulligan S."/>
            <person name="Walker R.L."/>
            <person name="Elzer P.E."/>
            <person name="Hassan K.A."/>
            <person name="Paulsen I.T."/>
        </authorList>
    </citation>
    <scope>NUCLEOTIDE SEQUENCE [LARGE SCALE GENOMIC DNA]</scope>
    <source>
        <strain>ATCC 25840 / 63/290 / NCTC 10512</strain>
    </source>
</reference>
<sequence>MSRTLVLVRHGQSEWNLKNLFTGWRDPGLTEQGHAEAKAAGQRLKAAGLKFDIAYTSALSRAQVTCQHILDELGQPGLETIRDQALNERDYGDLSGLNKDDARAKWGEEQVHIWRRSYDVPPPGGESLKDTGARVWPYYLHTIQPHVLREETVLVAAHGNSLRTLIMALDGLTPEQILKQELNTGVPIIYRLNADSTVASKEILSA</sequence>